<evidence type="ECO:0000250" key="1"/>
<evidence type="ECO:0000255" key="2"/>
<evidence type="ECO:0000255" key="3">
    <source>
        <dbReference type="PROSITE-ProRule" id="PRU00274"/>
    </source>
</evidence>
<evidence type="ECO:0000269" key="4">
    <source>
    </source>
</evidence>
<evidence type="ECO:0000305" key="5"/>
<protein>
    <recommendedName>
        <fullName>Arginine esterase</fullName>
        <ecNumber>3.4.21.35</ecNumber>
    </recommendedName>
</protein>
<keyword id="KW-0903">Direct protein sequencing</keyword>
<keyword id="KW-1015">Disulfide bond</keyword>
<keyword id="KW-0325">Glycoprotein</keyword>
<keyword id="KW-0378">Hydrolase</keyword>
<keyword id="KW-0645">Protease</keyword>
<keyword id="KW-1185">Reference proteome</keyword>
<keyword id="KW-0720">Serine protease</keyword>
<keyword id="KW-0732">Signal</keyword>
<keyword id="KW-0865">Zymogen</keyword>
<dbReference type="EC" id="3.4.21.35"/>
<dbReference type="EMBL" id="Y00751">
    <property type="protein sequence ID" value="CAA68720.1"/>
    <property type="molecule type" value="mRNA"/>
</dbReference>
<dbReference type="EMBL" id="M63669">
    <property type="protein sequence ID" value="AAA30831.1"/>
    <property type="molecule type" value="Genomic_DNA"/>
</dbReference>
<dbReference type="PIR" id="A30981">
    <property type="entry name" value="A30981"/>
</dbReference>
<dbReference type="PIR" id="A37938">
    <property type="entry name" value="A37938"/>
</dbReference>
<dbReference type="RefSeq" id="NP_001003284.1">
    <property type="nucleotide sequence ID" value="NM_001003284.1"/>
</dbReference>
<dbReference type="SMR" id="P09582"/>
<dbReference type="FunCoup" id="P09582">
    <property type="interactions" value="33"/>
</dbReference>
<dbReference type="STRING" id="9615.ENSCAFP00000065497"/>
<dbReference type="Allergome" id="5762">
    <property type="allergen name" value="Can f 5"/>
</dbReference>
<dbReference type="Allergome" id="5763">
    <property type="allergen name" value="Can f 5.0101"/>
</dbReference>
<dbReference type="MEROPS" id="S01.289"/>
<dbReference type="PaxDb" id="9612-ENSCAFP00000004309"/>
<dbReference type="GeneID" id="403967"/>
<dbReference type="KEGG" id="cfa:403967"/>
<dbReference type="CTD" id="3817"/>
<dbReference type="eggNOG" id="KOG3627">
    <property type="taxonomic scope" value="Eukaryota"/>
</dbReference>
<dbReference type="InParanoid" id="P09582"/>
<dbReference type="OrthoDB" id="10061449at2759"/>
<dbReference type="Proteomes" id="UP000002254">
    <property type="component" value="Unplaced"/>
</dbReference>
<dbReference type="Proteomes" id="UP000694429">
    <property type="component" value="Unplaced"/>
</dbReference>
<dbReference type="Proteomes" id="UP000694542">
    <property type="component" value="Unplaced"/>
</dbReference>
<dbReference type="Proteomes" id="UP000805418">
    <property type="component" value="Unplaced"/>
</dbReference>
<dbReference type="GO" id="GO:0005615">
    <property type="term" value="C:extracellular space"/>
    <property type="evidence" value="ECO:0000318"/>
    <property type="project" value="GO_Central"/>
</dbReference>
<dbReference type="GO" id="GO:0030141">
    <property type="term" value="C:secretory granule"/>
    <property type="evidence" value="ECO:0000318"/>
    <property type="project" value="GO_Central"/>
</dbReference>
<dbReference type="GO" id="GO:0004252">
    <property type="term" value="F:serine-type endopeptidase activity"/>
    <property type="evidence" value="ECO:0000318"/>
    <property type="project" value="GO_Central"/>
</dbReference>
<dbReference type="GO" id="GO:0003073">
    <property type="term" value="P:regulation of systemic arterial blood pressure"/>
    <property type="evidence" value="ECO:0000318"/>
    <property type="project" value="GO_Central"/>
</dbReference>
<dbReference type="GO" id="GO:0031638">
    <property type="term" value="P:zymogen activation"/>
    <property type="evidence" value="ECO:0000318"/>
    <property type="project" value="GO_Central"/>
</dbReference>
<dbReference type="CDD" id="cd00190">
    <property type="entry name" value="Tryp_SPc"/>
    <property type="match status" value="1"/>
</dbReference>
<dbReference type="FunFam" id="2.40.10.10:FF:000021">
    <property type="entry name" value="Kallikrein 1"/>
    <property type="match status" value="1"/>
</dbReference>
<dbReference type="FunFam" id="2.40.10.10:FF:000010">
    <property type="entry name" value="Kallikrein related peptidase 11"/>
    <property type="match status" value="1"/>
</dbReference>
<dbReference type="Gene3D" id="2.40.10.10">
    <property type="entry name" value="Trypsin-like serine proteases"/>
    <property type="match status" value="2"/>
</dbReference>
<dbReference type="InterPro" id="IPR009003">
    <property type="entry name" value="Peptidase_S1_PA"/>
</dbReference>
<dbReference type="InterPro" id="IPR043504">
    <property type="entry name" value="Peptidase_S1_PA_chymotrypsin"/>
</dbReference>
<dbReference type="InterPro" id="IPR001314">
    <property type="entry name" value="Peptidase_S1A"/>
</dbReference>
<dbReference type="InterPro" id="IPR001254">
    <property type="entry name" value="Trypsin_dom"/>
</dbReference>
<dbReference type="InterPro" id="IPR018114">
    <property type="entry name" value="TRYPSIN_HIS"/>
</dbReference>
<dbReference type="InterPro" id="IPR033116">
    <property type="entry name" value="TRYPSIN_SER"/>
</dbReference>
<dbReference type="PANTHER" id="PTHR24271:SF47">
    <property type="entry name" value="KALLIKREIN-1"/>
    <property type="match status" value="1"/>
</dbReference>
<dbReference type="PANTHER" id="PTHR24271">
    <property type="entry name" value="KALLIKREIN-RELATED"/>
    <property type="match status" value="1"/>
</dbReference>
<dbReference type="Pfam" id="PF00089">
    <property type="entry name" value="Trypsin"/>
    <property type="match status" value="1"/>
</dbReference>
<dbReference type="PRINTS" id="PR00722">
    <property type="entry name" value="CHYMOTRYPSIN"/>
</dbReference>
<dbReference type="SMART" id="SM00020">
    <property type="entry name" value="Tryp_SPc"/>
    <property type="match status" value="1"/>
</dbReference>
<dbReference type="SUPFAM" id="SSF50494">
    <property type="entry name" value="Trypsin-like serine proteases"/>
    <property type="match status" value="1"/>
</dbReference>
<dbReference type="PROSITE" id="PS50240">
    <property type="entry name" value="TRYPSIN_DOM"/>
    <property type="match status" value="1"/>
</dbReference>
<dbReference type="PROSITE" id="PS00134">
    <property type="entry name" value="TRYPSIN_HIS"/>
    <property type="match status" value="1"/>
</dbReference>
<dbReference type="PROSITE" id="PS00135">
    <property type="entry name" value="TRYPSIN_SER"/>
    <property type="match status" value="1"/>
</dbReference>
<proteinExistence type="evidence at protein level"/>
<organism>
    <name type="scientific">Canis lupus familiaris</name>
    <name type="common">Dog</name>
    <name type="synonym">Canis familiaris</name>
    <dbReference type="NCBI Taxonomy" id="9615"/>
    <lineage>
        <taxon>Eukaryota</taxon>
        <taxon>Metazoa</taxon>
        <taxon>Chordata</taxon>
        <taxon>Craniata</taxon>
        <taxon>Vertebrata</taxon>
        <taxon>Euteleostomi</taxon>
        <taxon>Mammalia</taxon>
        <taxon>Eutheria</taxon>
        <taxon>Laurasiatheria</taxon>
        <taxon>Carnivora</taxon>
        <taxon>Caniformia</taxon>
        <taxon>Canidae</taxon>
        <taxon>Canis</taxon>
    </lineage>
</organism>
<feature type="signal peptide" evidence="2">
    <location>
        <begin position="1"/>
        <end position="17"/>
    </location>
</feature>
<feature type="propeptide" id="PRO_0000028019" description="Activation peptide" evidence="4">
    <location>
        <begin position="18"/>
        <end position="24"/>
    </location>
</feature>
<feature type="chain" id="PRO_0000028020" description="Arginine esterase">
    <location>
        <begin position="25"/>
        <end position="260"/>
    </location>
</feature>
<feature type="domain" description="Peptidase S1" evidence="3">
    <location>
        <begin position="25"/>
        <end position="257"/>
    </location>
</feature>
<feature type="active site" description="Charge relay system" evidence="1">
    <location>
        <position position="65"/>
    </location>
</feature>
<feature type="active site" description="Charge relay system" evidence="1">
    <location>
        <position position="119"/>
    </location>
</feature>
<feature type="active site" description="Charge relay system" evidence="1">
    <location>
        <position position="212"/>
    </location>
</feature>
<feature type="glycosylation site" description="N-linked (GlcNAc...) asparagine" evidence="5">
    <location>
        <position position="79"/>
    </location>
</feature>
<feature type="disulfide bond" evidence="3">
    <location>
        <begin position="31"/>
        <end position="172"/>
    </location>
</feature>
<feature type="disulfide bond" evidence="3">
    <location>
        <begin position="50"/>
        <end position="66"/>
    </location>
</feature>
<feature type="disulfide bond" evidence="3">
    <location>
        <begin position="151"/>
        <end position="218"/>
    </location>
</feature>
<feature type="disulfide bond" evidence="3">
    <location>
        <begin position="183"/>
        <end position="197"/>
    </location>
</feature>
<feature type="disulfide bond" evidence="3">
    <location>
        <begin position="208"/>
        <end position="233"/>
    </location>
</feature>
<feature type="sequence conflict" description="In Ref. 2; AAA30831." evidence="5" ref="2">
    <original>N</original>
    <variation>H</variation>
    <location>
        <position position="56"/>
    </location>
</feature>
<sequence length="260" mass="28746">MWFLALCLAMSLGWTGAEPHFQPRIIGGRECLKNSQPWQVAVYHNGEFACGGVLVNPEWVLTAAHCANSNCEVWLGRHNLSESEDEGQLVQVRKSFIHPLYKTKVPRAVIRPGEDRSHDLMLLHLEEPAKITKAVRVMDLPKKEPPLGSTCYVSGWGSTDPETIFHPGSLQCVDLKLLSNNQCAKVYTQKVTKFMLCAGVLEGKKDTCKGDSGGPLICDGELVGITSWGATPCGKPQMPSLYTRVMPHLMWIKDTMKANT</sequence>
<reference key="1">
    <citation type="journal article" date="1988" name="FEBS Lett.">
        <title>Nucleotide sequence of the androgen-dependent arginine esterase mRNA of canine prostate.</title>
        <authorList>
            <person name="Chapdelaine P."/>
            <person name="Ho-Kim M.-A."/>
            <person name="Tremblay R.R."/>
            <person name="Dube J.Y."/>
        </authorList>
    </citation>
    <scope>NUCLEOTIDE SEQUENCE [MRNA]</scope>
    <source>
        <tissue>Prostate</tissue>
    </source>
</reference>
<reference key="2">
    <citation type="journal article" date="1991" name="DNA Cell Biol.">
        <title>Characterization and expression of the prostatic arginine esterase gene, a canine glandular kallikrein.</title>
        <authorList>
            <person name="Chapdelaine P."/>
            <person name="Gauthier E."/>
            <person name="Ho-Kim M.-A."/>
            <person name="Bissonnette L."/>
            <person name="Tremblay R.R."/>
            <person name="Dube J.Y."/>
        </authorList>
    </citation>
    <scope>NUCLEOTIDE SEQUENCE [GENOMIC DNA]</scope>
</reference>
<reference key="3">
    <citation type="journal article" date="1984" name="FEBS Lett.">
        <title>The major androgen-dependent protease in dog prostate belongs to the kallikrein family: confirmation by partial amino acid sequencing.</title>
        <authorList>
            <person name="Lazure C."/>
            <person name="Leduc R."/>
            <person name="Seidah N.G."/>
            <person name="Chretien M."/>
            <person name="Dube J.Y."/>
            <person name="Chapdelaine P."/>
            <person name="Frenette G."/>
            <person name="Paquin R."/>
            <person name="Tremblay R.R."/>
        </authorList>
    </citation>
    <scope>PROTEIN SEQUENCE OF 25-50 AND 108-145</scope>
    <source>
        <tissue>Prostate</tissue>
    </source>
</reference>
<reference key="4">
    <citation type="journal article" date="1988" name="Mol. Cell. Endocrinol.">
        <title>Androgen regulation of canine prostatic arginine esterase mRNA using cloned cDNA.</title>
        <authorList>
            <person name="Chapdelaine P."/>
            <person name="Potvin C."/>
            <person name="Ho-Kim M.A."/>
            <person name="Larouche L."/>
            <person name="Bellemare G."/>
            <person name="Tremblay R.T."/>
            <person name="Dube J.Y."/>
        </authorList>
    </citation>
    <scope>NUCLEOTIDE SEQUENCE OF 105-260</scope>
</reference>
<accession>P09582</accession>
<name>ESTA_CANLF</name>
<comment type="function">
    <text>This serine protease is found in dog seminal plasma, its exact physiological function is not known.</text>
</comment>
<comment type="catalytic activity">
    <reaction>
        <text>Preferential cleavage of Arg-|-Xaa bonds in small molecule substrates. Highly selective action to release kallidin (lysyl-bradykinin) from kininogen involves hydrolysis of Met-|-Xaa or Leu-|-Xaa.</text>
        <dbReference type="EC" id="3.4.21.35"/>
    </reaction>
</comment>
<comment type="induction">
    <text>By androgens.</text>
</comment>
<comment type="similarity">
    <text evidence="3">Belongs to the peptidase S1 family. Kallikrein subfamily.</text>
</comment>